<comment type="function">
    <text evidence="1">May operate as a cation/H(+) antiporter.</text>
</comment>
<comment type="subcellular location">
    <subcellularLocation>
        <location evidence="1">Membrane</location>
        <topology evidence="1">Multi-pass membrane protein</topology>
    </subcellularLocation>
</comment>
<comment type="similarity">
    <text evidence="3">Belongs to the monovalent cation:proton antiporter 2 (CPA2) transporter (TC 2.A.37) family. CHX (TC 2.A.37.4) subfamily.</text>
</comment>
<name>CHX3_ARATH</name>
<keyword id="KW-0050">Antiport</keyword>
<keyword id="KW-0406">Ion transport</keyword>
<keyword id="KW-0472">Membrane</keyword>
<keyword id="KW-0630">Potassium</keyword>
<keyword id="KW-0633">Potassium transport</keyword>
<keyword id="KW-1185">Reference proteome</keyword>
<keyword id="KW-0812">Transmembrane</keyword>
<keyword id="KW-1133">Transmembrane helix</keyword>
<keyword id="KW-0813">Transport</keyword>
<reference key="1">
    <citation type="journal article" date="1997" name="DNA Res.">
        <title>Structural analysis of Arabidopsis thaliana chromosome 5. I. Sequence features of the 1.6 Mb regions covered by twenty physically assigned P1 clones.</title>
        <authorList>
            <person name="Sato S."/>
            <person name="Kotani H."/>
            <person name="Nakamura Y."/>
            <person name="Kaneko T."/>
            <person name="Asamizu E."/>
            <person name="Fukami M."/>
            <person name="Miyajima N."/>
            <person name="Tabata S."/>
        </authorList>
    </citation>
    <scope>NUCLEOTIDE SEQUENCE [LARGE SCALE GENOMIC DNA]</scope>
    <source>
        <strain>cv. Columbia</strain>
    </source>
</reference>
<reference key="2">
    <citation type="journal article" date="2017" name="Plant J.">
        <title>Araport11: a complete reannotation of the Arabidopsis thaliana reference genome.</title>
        <authorList>
            <person name="Cheng C.Y."/>
            <person name="Krishnakumar V."/>
            <person name="Chan A.P."/>
            <person name="Thibaud-Nissen F."/>
            <person name="Schobel S."/>
            <person name="Town C.D."/>
        </authorList>
    </citation>
    <scope>GENOME REANNOTATION</scope>
    <source>
        <strain>cv. Columbia</strain>
    </source>
</reference>
<reference key="3">
    <citation type="journal article" date="2004" name="Plant Physiol.">
        <title>Expression patterns of a novel AtCHX gene family highlight potential roles in osmotic adjustment and K+ homeostasis in pollen development.</title>
        <authorList>
            <person name="Sze H."/>
            <person name="Padmanaban S."/>
            <person name="Cellier F."/>
            <person name="Honys D."/>
            <person name="Cheng N.-H."/>
            <person name="Bock K.W."/>
            <person name="Conejero G."/>
            <person name="Li X."/>
            <person name="Twell D."/>
            <person name="Ward J.M."/>
            <person name="Hirschi K.D."/>
        </authorList>
    </citation>
    <scope>NUCLEOTIDE SEQUENCE [MRNA] OF 1-811</scope>
    <scope>GENE FAMILY</scope>
    <scope>NOMENCLATURE</scope>
    <source>
        <tissue>Pollen</tissue>
    </source>
</reference>
<reference key="4">
    <citation type="journal article" date="2001" name="Plant Physiol.">
        <title>Phylogenetic relationships within cation transporter families of Arabidopsis.</title>
        <authorList>
            <person name="Maeser P."/>
            <person name="Thomine S."/>
            <person name="Schroeder J.I."/>
            <person name="Ward J.M."/>
            <person name="Hirschi K."/>
            <person name="Sze H."/>
            <person name="Talke I.N."/>
            <person name="Amtmann A."/>
            <person name="Maathuis F.J.M."/>
            <person name="Sanders D."/>
            <person name="Harper J.F."/>
            <person name="Tchieu J."/>
            <person name="Gribskov M."/>
            <person name="Persans M.W."/>
            <person name="Salt D.E."/>
            <person name="Kim S.A."/>
            <person name="Guerinot M.L."/>
        </authorList>
    </citation>
    <scope>GENE FAMILY</scope>
    <scope>NOMENCLATURE</scope>
</reference>
<evidence type="ECO:0000250" key="1"/>
<evidence type="ECO:0000255" key="2"/>
<evidence type="ECO:0000305" key="3"/>
<gene>
    <name type="primary">CHX3</name>
    <name type="synonym">CHX03</name>
    <name type="ordered locus">At5g22900</name>
    <name type="ORF">MRN17.13</name>
</gene>
<feature type="chain" id="PRO_0000394973" description="Cation/H(+) antiporter 3">
    <location>
        <begin position="1"/>
        <end position="822"/>
    </location>
</feature>
<feature type="transmembrane region" description="Helical" evidence="2">
    <location>
        <begin position="55"/>
        <end position="75"/>
    </location>
</feature>
<feature type="transmembrane region" description="Helical" evidence="2">
    <location>
        <begin position="116"/>
        <end position="136"/>
    </location>
</feature>
<feature type="transmembrane region" description="Helical" evidence="2">
    <location>
        <begin position="150"/>
        <end position="170"/>
    </location>
</feature>
<feature type="transmembrane region" description="Helical" evidence="2">
    <location>
        <begin position="190"/>
        <end position="210"/>
    </location>
</feature>
<feature type="transmembrane region" description="Helical" evidence="2">
    <location>
        <begin position="224"/>
        <end position="244"/>
    </location>
</feature>
<feature type="transmembrane region" description="Helical" evidence="2">
    <location>
        <begin position="274"/>
        <end position="294"/>
    </location>
</feature>
<feature type="transmembrane region" description="Helical" evidence="2">
    <location>
        <begin position="305"/>
        <end position="325"/>
    </location>
</feature>
<feature type="transmembrane region" description="Helical" evidence="2">
    <location>
        <begin position="331"/>
        <end position="351"/>
    </location>
</feature>
<feature type="transmembrane region" description="Helical" evidence="2">
    <location>
        <begin position="362"/>
        <end position="382"/>
    </location>
</feature>
<feature type="transmembrane region" description="Helical" evidence="2">
    <location>
        <begin position="388"/>
        <end position="408"/>
    </location>
</feature>
<feature type="transmembrane region" description="Helical" evidence="2">
    <location>
        <begin position="418"/>
        <end position="438"/>
    </location>
</feature>
<feature type="transmembrane region" description="Helical" evidence="2">
    <location>
        <begin position="447"/>
        <end position="467"/>
    </location>
</feature>
<sequence length="822" mass="92453">MEVFGDNKMFYMRDTWREGTMICDVLPINPSSNGVWPQQKFSDPNINVHFWNYAFPHLQMIFLIISFLWQFLHFFLRRLGMIRFTSHMLTGVLLSKSFLKENSAARRFFSTEDYKEIVFSLTAACSYMMFWFLMGVKMDTGLIRTTGRKAITIGLSSVLLSTLVCSVIFFGNLRDVGTKNSDHTLNSLEYVVIYSIQCLSSFPVVGNLLFELRLQNSELGRLAISSAVISDFSTSILASVLIFMKELKDEQTRLGSVFIGDVIAGNRPLMRAGIVVLFVCIAIYVFRPLMFYIIKQTPSGRPVKAIYLSTIIVMVSGSAILANWCKQSIFMGPFILGLAVPHGPPLGSAIIQKYESAIFGTFLPFFIASSSTEIDISALFGWEGLNGIILIMVTSFVVKFIFTTVPALFYGMPMEDCFALSLIMSFKGIFELGAYALAYQRGSVRPETFTVACLYITLNSAIIPPILRYLYDPSRMYAGYEKRNMQHLKPNSELRILSCIYRTDDISPMINLLEAICPSRESPVATYVLHLMELVGQANPIFISHKLQTRRTEETSYSNNVLVSFEKFRKDFYGSVFVSTYTALSMPDTMHGDICMLALNNTTSLILLPFHQTWSADGSALISNNNMIRNLNKSVLDVAPCSVGVFVYRSSSGRKNISSGRKTINGTVPNLSSYNICMIFLGGKDDREAVTLATRMARDPRINITIVRLITTDEKARENTVWDKMLDDELLRDVKSNTLVDIFYSEKAIEDAAETSSLLRSMVSDFDMFIVGRGNGRTSVFTEGLEEWSEFKELGIIGDLLTSQDFNCQASVLVIQQQQLMI</sequence>
<accession>Q9FFB8</accession>
<accession>Q58P73</accession>
<dbReference type="EMBL" id="AB005243">
    <property type="protein sequence ID" value="BAB10611.1"/>
    <property type="molecule type" value="Genomic_DNA"/>
</dbReference>
<dbReference type="EMBL" id="CP002688">
    <property type="protein sequence ID" value="AED93095.1"/>
    <property type="molecule type" value="Genomic_DNA"/>
</dbReference>
<dbReference type="EMBL" id="AY926466">
    <property type="protein sequence ID" value="AAX49538.1"/>
    <property type="molecule type" value="mRNA"/>
</dbReference>
<dbReference type="RefSeq" id="NP_197681.1">
    <property type="nucleotide sequence ID" value="NM_122196.1"/>
</dbReference>
<dbReference type="SMR" id="Q9FFB8"/>
<dbReference type="STRING" id="3702.Q9FFB8"/>
<dbReference type="PaxDb" id="3702-AT5G22900.1"/>
<dbReference type="EnsemblPlants" id="AT5G22900.1">
    <property type="protein sequence ID" value="AT5G22900.1"/>
    <property type="gene ID" value="AT5G22900"/>
</dbReference>
<dbReference type="GeneID" id="832354"/>
<dbReference type="Gramene" id="AT5G22900.1">
    <property type="protein sequence ID" value="AT5G22900.1"/>
    <property type="gene ID" value="AT5G22900"/>
</dbReference>
<dbReference type="KEGG" id="ath:AT5G22900"/>
<dbReference type="Araport" id="AT5G22900"/>
<dbReference type="TAIR" id="AT5G22900">
    <property type="gene designation" value="CHX3"/>
</dbReference>
<dbReference type="eggNOG" id="KOG1650">
    <property type="taxonomic scope" value="Eukaryota"/>
</dbReference>
<dbReference type="HOGENOM" id="CLU_005126_6_1_1"/>
<dbReference type="InParanoid" id="Q9FFB8"/>
<dbReference type="OMA" id="RNMQHLK"/>
<dbReference type="PhylomeDB" id="Q9FFB8"/>
<dbReference type="PRO" id="PR:Q9FFB8"/>
<dbReference type="Proteomes" id="UP000006548">
    <property type="component" value="Chromosome 5"/>
</dbReference>
<dbReference type="ExpressionAtlas" id="Q9FFB8">
    <property type="expression patterns" value="baseline and differential"/>
</dbReference>
<dbReference type="GO" id="GO:0016020">
    <property type="term" value="C:membrane"/>
    <property type="evidence" value="ECO:0007669"/>
    <property type="project" value="UniProtKB-SubCell"/>
</dbReference>
<dbReference type="GO" id="GO:0015297">
    <property type="term" value="F:antiporter activity"/>
    <property type="evidence" value="ECO:0007669"/>
    <property type="project" value="UniProtKB-KW"/>
</dbReference>
<dbReference type="GO" id="GO:0006813">
    <property type="term" value="P:potassium ion transport"/>
    <property type="evidence" value="ECO:0007669"/>
    <property type="project" value="UniProtKB-KW"/>
</dbReference>
<dbReference type="GO" id="GO:1902600">
    <property type="term" value="P:proton transmembrane transport"/>
    <property type="evidence" value="ECO:0007669"/>
    <property type="project" value="InterPro"/>
</dbReference>
<dbReference type="Gene3D" id="1.20.1530.20">
    <property type="match status" value="1"/>
</dbReference>
<dbReference type="InterPro" id="IPR006153">
    <property type="entry name" value="Cation/H_exchanger_TM"/>
</dbReference>
<dbReference type="InterPro" id="IPR050794">
    <property type="entry name" value="CPA2_transporter"/>
</dbReference>
<dbReference type="InterPro" id="IPR038770">
    <property type="entry name" value="Na+/solute_symporter_sf"/>
</dbReference>
<dbReference type="PANTHER" id="PTHR32468">
    <property type="entry name" value="CATION/H + ANTIPORTER"/>
    <property type="match status" value="1"/>
</dbReference>
<dbReference type="PANTHER" id="PTHR32468:SF118">
    <property type="entry name" value="CATION_H(+) ANTIPORTER 3"/>
    <property type="match status" value="1"/>
</dbReference>
<dbReference type="Pfam" id="PF23256">
    <property type="entry name" value="CHX17_2nd"/>
    <property type="match status" value="1"/>
</dbReference>
<dbReference type="Pfam" id="PF23259">
    <property type="entry name" value="CHX17_C"/>
    <property type="match status" value="1"/>
</dbReference>
<dbReference type="Pfam" id="PF00999">
    <property type="entry name" value="Na_H_Exchanger"/>
    <property type="match status" value="1"/>
</dbReference>
<proteinExistence type="evidence at transcript level"/>
<protein>
    <recommendedName>
        <fullName>Cation/H(+) antiporter 3</fullName>
    </recommendedName>
    <alternativeName>
        <fullName>Protein CATION/H+ EXCHANGER 3</fullName>
        <shortName>AtCHX3</shortName>
    </alternativeName>
</protein>
<organism>
    <name type="scientific">Arabidopsis thaliana</name>
    <name type="common">Mouse-ear cress</name>
    <dbReference type="NCBI Taxonomy" id="3702"/>
    <lineage>
        <taxon>Eukaryota</taxon>
        <taxon>Viridiplantae</taxon>
        <taxon>Streptophyta</taxon>
        <taxon>Embryophyta</taxon>
        <taxon>Tracheophyta</taxon>
        <taxon>Spermatophyta</taxon>
        <taxon>Magnoliopsida</taxon>
        <taxon>eudicotyledons</taxon>
        <taxon>Gunneridae</taxon>
        <taxon>Pentapetalae</taxon>
        <taxon>rosids</taxon>
        <taxon>malvids</taxon>
        <taxon>Brassicales</taxon>
        <taxon>Brassicaceae</taxon>
        <taxon>Camelineae</taxon>
        <taxon>Arabidopsis</taxon>
    </lineage>
</organism>